<gene>
    <name type="ordered locus">MPN_418</name>
    <name type="ORF">MP422.1</name>
</gene>
<accession>P57114</accession>
<organism>
    <name type="scientific">Mycoplasma pneumoniae (strain ATCC 29342 / M129 / Subtype 1)</name>
    <name type="common">Mycoplasmoides pneumoniae</name>
    <dbReference type="NCBI Taxonomy" id="272634"/>
    <lineage>
        <taxon>Bacteria</taxon>
        <taxon>Bacillati</taxon>
        <taxon>Mycoplasmatota</taxon>
        <taxon>Mycoplasmoidales</taxon>
        <taxon>Mycoplasmoidaceae</taxon>
        <taxon>Mycoplasmoides</taxon>
    </lineage>
</organism>
<sequence length="140" mass="15936">MQYILGIDFGLKRIGTALVNTIDRFPSPFRVFAVQNNLQQAVNTLFKDLKQAGYELVQIVIGFPHFHYQSSIQVSIHKFVELIKTRFNVPVTLIDESGTTSEVKANLQELGLKNRTFKKAKDTLAATLILERFLNQQKPN</sequence>
<comment type="function">
    <text evidence="1">Could be a nuclease involved in processing of the 5'-end of pre-16S rRNA.</text>
</comment>
<comment type="subcellular location">
    <subcellularLocation>
        <location evidence="1">Cytoplasm</location>
    </subcellularLocation>
</comment>
<comment type="similarity">
    <text evidence="1">Belongs to the YqgF nuclease family.</text>
</comment>
<keyword id="KW-0963">Cytoplasm</keyword>
<keyword id="KW-0378">Hydrolase</keyword>
<keyword id="KW-0540">Nuclease</keyword>
<keyword id="KW-1185">Reference proteome</keyword>
<keyword id="KW-0690">Ribosome biogenesis</keyword>
<name>YQGF_MYCPN</name>
<feature type="chain" id="PRO_0000172098" description="Putative pre-16S rRNA nuclease">
    <location>
        <begin position="1"/>
        <end position="140"/>
    </location>
</feature>
<evidence type="ECO:0000255" key="1">
    <source>
        <dbReference type="HAMAP-Rule" id="MF_00651"/>
    </source>
</evidence>
<dbReference type="EC" id="3.1.-.-" evidence="1"/>
<dbReference type="EMBL" id="U00089">
    <property type="protein sequence ID" value="AAG34748.1"/>
    <property type="molecule type" value="Genomic_DNA"/>
</dbReference>
<dbReference type="RefSeq" id="NP_110106.1">
    <property type="nucleotide sequence ID" value="NC_000912.1"/>
</dbReference>
<dbReference type="SMR" id="P57114"/>
<dbReference type="IntAct" id="P57114">
    <property type="interactions" value="1"/>
</dbReference>
<dbReference type="STRING" id="272634.MPN_418"/>
<dbReference type="EnsemblBacteria" id="AAG34748">
    <property type="protein sequence ID" value="AAG34748"/>
    <property type="gene ID" value="MPN_418"/>
</dbReference>
<dbReference type="KEGG" id="mpn:MPN_418"/>
<dbReference type="PATRIC" id="fig|272634.6.peg.453"/>
<dbReference type="HOGENOM" id="CLU_098240_2_2_14"/>
<dbReference type="OrthoDB" id="9796140at2"/>
<dbReference type="BioCyc" id="MPNE272634:G1GJ3-677-MONOMER"/>
<dbReference type="Proteomes" id="UP000000808">
    <property type="component" value="Chromosome"/>
</dbReference>
<dbReference type="GO" id="GO:0005829">
    <property type="term" value="C:cytosol"/>
    <property type="evidence" value="ECO:0007669"/>
    <property type="project" value="TreeGrafter"/>
</dbReference>
<dbReference type="GO" id="GO:0004518">
    <property type="term" value="F:nuclease activity"/>
    <property type="evidence" value="ECO:0007669"/>
    <property type="project" value="UniProtKB-KW"/>
</dbReference>
<dbReference type="GO" id="GO:0000967">
    <property type="term" value="P:rRNA 5'-end processing"/>
    <property type="evidence" value="ECO:0007669"/>
    <property type="project" value="UniProtKB-UniRule"/>
</dbReference>
<dbReference type="CDD" id="cd16964">
    <property type="entry name" value="YqgF"/>
    <property type="match status" value="1"/>
</dbReference>
<dbReference type="Gene3D" id="3.30.420.140">
    <property type="entry name" value="YqgF/RNase H-like domain"/>
    <property type="match status" value="1"/>
</dbReference>
<dbReference type="HAMAP" id="MF_00651">
    <property type="entry name" value="Nuclease_YqgF"/>
    <property type="match status" value="1"/>
</dbReference>
<dbReference type="InterPro" id="IPR012337">
    <property type="entry name" value="RNaseH-like_sf"/>
</dbReference>
<dbReference type="InterPro" id="IPR005227">
    <property type="entry name" value="YqgF"/>
</dbReference>
<dbReference type="InterPro" id="IPR006641">
    <property type="entry name" value="YqgF/RNaseH-like_dom"/>
</dbReference>
<dbReference type="InterPro" id="IPR037027">
    <property type="entry name" value="YqgF/RNaseH-like_dom_sf"/>
</dbReference>
<dbReference type="NCBIfam" id="TIGR00250">
    <property type="entry name" value="RNAse_H_YqgF"/>
    <property type="match status" value="1"/>
</dbReference>
<dbReference type="PANTHER" id="PTHR33317">
    <property type="entry name" value="POLYNUCLEOTIDYL TRANSFERASE, RIBONUCLEASE H-LIKE SUPERFAMILY PROTEIN"/>
    <property type="match status" value="1"/>
</dbReference>
<dbReference type="PANTHER" id="PTHR33317:SF4">
    <property type="entry name" value="POLYNUCLEOTIDYL TRANSFERASE, RIBONUCLEASE H-LIKE SUPERFAMILY PROTEIN"/>
    <property type="match status" value="1"/>
</dbReference>
<dbReference type="Pfam" id="PF03652">
    <property type="entry name" value="RuvX"/>
    <property type="match status" value="1"/>
</dbReference>
<dbReference type="SMART" id="SM00732">
    <property type="entry name" value="YqgFc"/>
    <property type="match status" value="1"/>
</dbReference>
<dbReference type="SUPFAM" id="SSF53098">
    <property type="entry name" value="Ribonuclease H-like"/>
    <property type="match status" value="1"/>
</dbReference>
<protein>
    <recommendedName>
        <fullName evidence="1">Putative pre-16S rRNA nuclease</fullName>
        <ecNumber evidence="1">3.1.-.-</ecNumber>
    </recommendedName>
</protein>
<proteinExistence type="inferred from homology"/>
<reference key="1">
    <citation type="journal article" date="1996" name="Nucleic Acids Res.">
        <title>Complete sequence analysis of the genome of the bacterium Mycoplasma pneumoniae.</title>
        <authorList>
            <person name="Himmelreich R."/>
            <person name="Hilbert H."/>
            <person name="Plagens H."/>
            <person name="Pirkl E."/>
            <person name="Li B.-C."/>
            <person name="Herrmann R."/>
        </authorList>
    </citation>
    <scope>NUCLEOTIDE SEQUENCE [LARGE SCALE GENOMIC DNA]</scope>
    <source>
        <strain>ATCC 29342 / M129 / Subtype 1</strain>
    </source>
</reference>
<reference key="2">
    <citation type="journal article" date="2000" name="Nucleic Acids Res.">
        <title>Re-annotating the Mycoplasma pneumoniae genome sequence: adding value, function and reading frames.</title>
        <authorList>
            <person name="Dandekar T."/>
            <person name="Huynen M."/>
            <person name="Regula J.T."/>
            <person name="Ueberle B."/>
            <person name="Zimmermann C.U."/>
            <person name="Andrade M.A."/>
            <person name="Doerks T."/>
            <person name="Sanchez-Pulido L."/>
            <person name="Snel B."/>
            <person name="Suyama M."/>
            <person name="Yuan Y.P."/>
            <person name="Herrmann R."/>
            <person name="Bork P."/>
        </authorList>
    </citation>
    <scope>IDENTIFICATION</scope>
    <source>
        <strain>ATCC 29342 / M129 / Subtype 1</strain>
    </source>
</reference>